<proteinExistence type="inferred from homology"/>
<evidence type="ECO:0000255" key="1">
    <source>
        <dbReference type="HAMAP-Rule" id="MF_01333"/>
    </source>
</evidence>
<evidence type="ECO:0000305" key="2"/>
<sequence length="169" mass="19462">MEHPMRKIRIEKVTLNIGVGESGEKLDKAYELLKRLTGQKPVKTKAKVRVEQWHIRPGLPIGVKVTLRGEKAYKILKEKLLPAVDFKIKASSFTDRGFGFGIPEYIMIPGMKYDPELGLIGLEAYVTLERPGYRVERRRIKRSKVGSRHRLNKEEIIKWAQEELGVQII</sequence>
<organism>
    <name type="scientific">Nanoarchaeum equitans (strain Kin4-M)</name>
    <dbReference type="NCBI Taxonomy" id="228908"/>
    <lineage>
        <taxon>Archaea</taxon>
        <taxon>Nanobdellota</taxon>
        <taxon>Candidatus Nanoarchaeia</taxon>
        <taxon>Nanoarchaeales</taxon>
        <taxon>Nanoarchaeaceae</taxon>
        <taxon>Nanoarchaeum</taxon>
    </lineage>
</organism>
<feature type="chain" id="PRO_0000125062" description="Large ribosomal subunit protein uL5">
    <location>
        <begin position="1"/>
        <end position="169"/>
    </location>
</feature>
<name>RL5_NANEQ</name>
<accession>Q74N79</accession>
<reference key="1">
    <citation type="journal article" date="2003" name="Proc. Natl. Acad. Sci. U.S.A.">
        <title>The genome of Nanoarchaeum equitans: insights into early archaeal evolution and derived parasitism.</title>
        <authorList>
            <person name="Waters E."/>
            <person name="Hohn M.J."/>
            <person name="Ahel I."/>
            <person name="Graham D.E."/>
            <person name="Adams M.D."/>
            <person name="Barnstead M."/>
            <person name="Beeson K.Y."/>
            <person name="Bibbs L."/>
            <person name="Bolanos R."/>
            <person name="Keller M."/>
            <person name="Kretz K."/>
            <person name="Lin X."/>
            <person name="Mathur E."/>
            <person name="Ni J."/>
            <person name="Podar M."/>
            <person name="Richardson T."/>
            <person name="Sutton G.G."/>
            <person name="Simon M."/>
            <person name="Soell D."/>
            <person name="Stetter K.O."/>
            <person name="Short J.M."/>
            <person name="Noorderwier M."/>
        </authorList>
    </citation>
    <scope>NUCLEOTIDE SEQUENCE [LARGE SCALE GENOMIC DNA]</scope>
    <source>
        <strain>Kin4-M</strain>
    </source>
</reference>
<gene>
    <name evidence="1" type="primary">rpl5</name>
    <name type="ordered locus">NEQ093</name>
</gene>
<dbReference type="EMBL" id="AE017199">
    <property type="protein sequence ID" value="AAR38950.1"/>
    <property type="molecule type" value="Genomic_DNA"/>
</dbReference>
<dbReference type="SMR" id="Q74N79"/>
<dbReference type="STRING" id="228908.NEQ093"/>
<dbReference type="EnsemblBacteria" id="AAR38950">
    <property type="protein sequence ID" value="AAR38950"/>
    <property type="gene ID" value="NEQ093"/>
</dbReference>
<dbReference type="KEGG" id="neq:NEQ093"/>
<dbReference type="PATRIC" id="fig|228908.8.peg.99"/>
<dbReference type="HOGENOM" id="CLU_061015_3_0_2"/>
<dbReference type="Proteomes" id="UP000000578">
    <property type="component" value="Chromosome"/>
</dbReference>
<dbReference type="GO" id="GO:1990904">
    <property type="term" value="C:ribonucleoprotein complex"/>
    <property type="evidence" value="ECO:0007669"/>
    <property type="project" value="UniProtKB-KW"/>
</dbReference>
<dbReference type="GO" id="GO:0005840">
    <property type="term" value="C:ribosome"/>
    <property type="evidence" value="ECO:0007669"/>
    <property type="project" value="UniProtKB-KW"/>
</dbReference>
<dbReference type="GO" id="GO:0019843">
    <property type="term" value="F:rRNA binding"/>
    <property type="evidence" value="ECO:0007669"/>
    <property type="project" value="UniProtKB-UniRule"/>
</dbReference>
<dbReference type="GO" id="GO:0003735">
    <property type="term" value="F:structural constituent of ribosome"/>
    <property type="evidence" value="ECO:0007669"/>
    <property type="project" value="InterPro"/>
</dbReference>
<dbReference type="GO" id="GO:0000049">
    <property type="term" value="F:tRNA binding"/>
    <property type="evidence" value="ECO:0007669"/>
    <property type="project" value="UniProtKB-UniRule"/>
</dbReference>
<dbReference type="GO" id="GO:0006412">
    <property type="term" value="P:translation"/>
    <property type="evidence" value="ECO:0007669"/>
    <property type="project" value="UniProtKB-UniRule"/>
</dbReference>
<dbReference type="FunFam" id="3.30.1440.10:FF:000002">
    <property type="entry name" value="60S ribosomal protein L11"/>
    <property type="match status" value="1"/>
</dbReference>
<dbReference type="Gene3D" id="3.30.1440.10">
    <property type="match status" value="1"/>
</dbReference>
<dbReference type="HAMAP" id="MF_01333_A">
    <property type="entry name" value="Ribosomal_uL5_A"/>
    <property type="match status" value="1"/>
</dbReference>
<dbReference type="InterPro" id="IPR002132">
    <property type="entry name" value="Ribosomal_uL5"/>
</dbReference>
<dbReference type="InterPro" id="IPR022804">
    <property type="entry name" value="Ribosomal_uL5_arc"/>
</dbReference>
<dbReference type="InterPro" id="IPR031309">
    <property type="entry name" value="Ribosomal_uL5_C"/>
</dbReference>
<dbReference type="InterPro" id="IPR022803">
    <property type="entry name" value="Ribosomal_uL5_dom_sf"/>
</dbReference>
<dbReference type="InterPro" id="IPR031310">
    <property type="entry name" value="Ribosomal_uL5_N"/>
</dbReference>
<dbReference type="NCBIfam" id="NF003258">
    <property type="entry name" value="PRK04219.1"/>
    <property type="match status" value="1"/>
</dbReference>
<dbReference type="PANTHER" id="PTHR11994">
    <property type="entry name" value="60S RIBOSOMAL PROTEIN L11-RELATED"/>
    <property type="match status" value="1"/>
</dbReference>
<dbReference type="Pfam" id="PF00281">
    <property type="entry name" value="Ribosomal_L5"/>
    <property type="match status" value="1"/>
</dbReference>
<dbReference type="Pfam" id="PF00673">
    <property type="entry name" value="Ribosomal_L5_C"/>
    <property type="match status" value="1"/>
</dbReference>
<dbReference type="PIRSF" id="PIRSF002161">
    <property type="entry name" value="Ribosomal_L5"/>
    <property type="match status" value="1"/>
</dbReference>
<dbReference type="SUPFAM" id="SSF55282">
    <property type="entry name" value="RL5-like"/>
    <property type="match status" value="1"/>
</dbReference>
<comment type="function">
    <text evidence="1">This is one of the proteins that bind and probably mediate the attachment of the 5S RNA into the large ribosomal subunit, where it forms part of the central protuberance. In the 70S ribosome it contacts protein S13 of the 30S subunit (bridge B1b), connecting the 2 subunits; this bridge is implicated in subunit movement. May contact the P site tRNA; the 5S rRNA and some of its associated proteins might help stabilize positioning of ribosome-bound tRNAs.</text>
</comment>
<comment type="subunit">
    <text evidence="1">Part of the 50S ribosomal subunit; contacts the 5S rRNA and probably tRNA. Forms a bridge to the 30S subunit in the 70S ribosome.</text>
</comment>
<comment type="similarity">
    <text evidence="1">Belongs to the universal ribosomal protein uL5 family.</text>
</comment>
<protein>
    <recommendedName>
        <fullName evidence="1">Large ribosomal subunit protein uL5</fullName>
    </recommendedName>
    <alternativeName>
        <fullName evidence="2">50S ribosomal protein L5</fullName>
    </alternativeName>
</protein>
<keyword id="KW-1185">Reference proteome</keyword>
<keyword id="KW-0687">Ribonucleoprotein</keyword>
<keyword id="KW-0689">Ribosomal protein</keyword>
<keyword id="KW-0694">RNA-binding</keyword>
<keyword id="KW-0699">rRNA-binding</keyword>
<keyword id="KW-0820">tRNA-binding</keyword>